<evidence type="ECO:0000255" key="1">
    <source>
        <dbReference type="HAMAP-Rule" id="MF_00194"/>
    </source>
</evidence>
<name>RDGC_ACTP7</name>
<organism>
    <name type="scientific">Actinobacillus pleuropneumoniae serotype 7 (strain AP76)</name>
    <dbReference type="NCBI Taxonomy" id="537457"/>
    <lineage>
        <taxon>Bacteria</taxon>
        <taxon>Pseudomonadati</taxon>
        <taxon>Pseudomonadota</taxon>
        <taxon>Gammaproteobacteria</taxon>
        <taxon>Pasteurellales</taxon>
        <taxon>Pasteurellaceae</taxon>
        <taxon>Actinobacillus</taxon>
    </lineage>
</organism>
<gene>
    <name evidence="1" type="primary">rdgC</name>
    <name type="ordered locus">APP7_0163</name>
</gene>
<reference key="1">
    <citation type="submission" date="2008-06" db="EMBL/GenBank/DDBJ databases">
        <title>Genome and proteome analysis of A. pleuropneumoniae serotype 7.</title>
        <authorList>
            <person name="Linke B."/>
            <person name="Buettner F."/>
            <person name="Martinez-Arias R."/>
            <person name="Goesmann A."/>
            <person name="Baltes N."/>
            <person name="Tegetmeyer H."/>
            <person name="Singh M."/>
            <person name="Gerlach G.F."/>
        </authorList>
    </citation>
    <scope>NUCLEOTIDE SEQUENCE [LARGE SCALE GENOMIC DNA]</scope>
    <source>
        <strain>AP76</strain>
    </source>
</reference>
<dbReference type="EMBL" id="CP001091">
    <property type="protein sequence ID" value="ACE60815.1"/>
    <property type="molecule type" value="Genomic_DNA"/>
</dbReference>
<dbReference type="RefSeq" id="WP_012478296.1">
    <property type="nucleotide sequence ID" value="NC_010939.1"/>
</dbReference>
<dbReference type="SMR" id="B3H003"/>
<dbReference type="KEGG" id="apa:APP7_0163"/>
<dbReference type="HOGENOM" id="CLU_052038_1_1_6"/>
<dbReference type="Proteomes" id="UP000001226">
    <property type="component" value="Chromosome"/>
</dbReference>
<dbReference type="GO" id="GO:0043590">
    <property type="term" value="C:bacterial nucleoid"/>
    <property type="evidence" value="ECO:0007669"/>
    <property type="project" value="TreeGrafter"/>
</dbReference>
<dbReference type="GO" id="GO:0005737">
    <property type="term" value="C:cytoplasm"/>
    <property type="evidence" value="ECO:0007669"/>
    <property type="project" value="UniProtKB-UniRule"/>
</dbReference>
<dbReference type="GO" id="GO:0003690">
    <property type="term" value="F:double-stranded DNA binding"/>
    <property type="evidence" value="ECO:0007669"/>
    <property type="project" value="TreeGrafter"/>
</dbReference>
<dbReference type="GO" id="GO:0006310">
    <property type="term" value="P:DNA recombination"/>
    <property type="evidence" value="ECO:0007669"/>
    <property type="project" value="UniProtKB-UniRule"/>
</dbReference>
<dbReference type="GO" id="GO:0000018">
    <property type="term" value="P:regulation of DNA recombination"/>
    <property type="evidence" value="ECO:0007669"/>
    <property type="project" value="TreeGrafter"/>
</dbReference>
<dbReference type="HAMAP" id="MF_00194">
    <property type="entry name" value="RdgC"/>
    <property type="match status" value="1"/>
</dbReference>
<dbReference type="InterPro" id="IPR007476">
    <property type="entry name" value="RdgC"/>
</dbReference>
<dbReference type="NCBIfam" id="NF001462">
    <property type="entry name" value="PRK00321.1-3"/>
    <property type="match status" value="1"/>
</dbReference>
<dbReference type="NCBIfam" id="NF001464">
    <property type="entry name" value="PRK00321.1-5"/>
    <property type="match status" value="1"/>
</dbReference>
<dbReference type="PANTHER" id="PTHR38103">
    <property type="entry name" value="RECOMBINATION-ASSOCIATED PROTEIN RDGC"/>
    <property type="match status" value="1"/>
</dbReference>
<dbReference type="PANTHER" id="PTHR38103:SF1">
    <property type="entry name" value="RECOMBINATION-ASSOCIATED PROTEIN RDGC"/>
    <property type="match status" value="1"/>
</dbReference>
<dbReference type="Pfam" id="PF04381">
    <property type="entry name" value="RdgC"/>
    <property type="match status" value="1"/>
</dbReference>
<proteinExistence type="inferred from homology"/>
<keyword id="KW-0963">Cytoplasm</keyword>
<keyword id="KW-0233">DNA recombination</keyword>
<feature type="chain" id="PRO_1000099053" description="Recombination-associated protein RdgC">
    <location>
        <begin position="1"/>
        <end position="302"/>
    </location>
</feature>
<accession>B3H003</accession>
<sequence>MFWFKNVMIYRLTSPLSLESSSLEEQLRQTKFSPCSQSDISKFGWSSPLSGSELLHFSQGKQFLLVSHKEDKLLPTNVIKKETEERIAVLEEKEARKLKKTEKQAIKDDVVAMLLPRAFSKHQFTAIWLDLDAQLVYVDAGSSKRAEDTLALLRKTLGSLPVVPISFALLPSEVMTNWIAKGHTPNWLSLLEEAELKSFDTDSVIRCKRQDLESEEIAQHLQAGKFVTKLAIDWENHFSCVLNEDATLSRVKFADEVREKNDDILKEDIAQRFDADFLLMTEELKLFTQKMIEEFGGIKERI</sequence>
<protein>
    <recommendedName>
        <fullName evidence="1">Recombination-associated protein RdgC</fullName>
    </recommendedName>
</protein>
<comment type="function">
    <text evidence="1">May be involved in recombination.</text>
</comment>
<comment type="subcellular location">
    <subcellularLocation>
        <location evidence="1">Cytoplasm</location>
        <location evidence="1">Nucleoid</location>
    </subcellularLocation>
</comment>
<comment type="similarity">
    <text evidence="1">Belongs to the RdgC family.</text>
</comment>